<comment type="similarity">
    <text evidence="1">Belongs to the universal ribosomal protein uS2 family.</text>
</comment>
<protein>
    <recommendedName>
        <fullName evidence="1">Small ribosomal subunit protein uS2</fullName>
    </recommendedName>
    <alternativeName>
        <fullName evidence="3">30S ribosomal protein S2</fullName>
    </alternativeName>
</protein>
<feature type="chain" id="PRO_1000115041" description="Small ribosomal subunit protein uS2">
    <location>
        <begin position="1"/>
        <end position="281"/>
    </location>
</feature>
<feature type="region of interest" description="Disordered" evidence="2">
    <location>
        <begin position="225"/>
        <end position="281"/>
    </location>
</feature>
<feature type="compositionally biased region" description="Basic residues" evidence="2">
    <location>
        <begin position="245"/>
        <end position="256"/>
    </location>
</feature>
<feature type="compositionally biased region" description="Low complexity" evidence="2">
    <location>
        <begin position="262"/>
        <end position="272"/>
    </location>
</feature>
<evidence type="ECO:0000255" key="1">
    <source>
        <dbReference type="HAMAP-Rule" id="MF_00291"/>
    </source>
</evidence>
<evidence type="ECO:0000256" key="2">
    <source>
        <dbReference type="SAM" id="MobiDB-lite"/>
    </source>
</evidence>
<evidence type="ECO:0000305" key="3"/>
<keyword id="KW-0687">Ribonucleoprotein</keyword>
<keyword id="KW-0689">Ribosomal protein</keyword>
<gene>
    <name evidence="1" type="primary">rpsB</name>
    <name type="ordered locus">PGN_1588</name>
</gene>
<reference key="1">
    <citation type="journal article" date="2008" name="DNA Res.">
        <title>Determination of the genome sequence of Porphyromonas gingivalis strain ATCC 33277 and genomic comparison with strain W83 revealed extensive genome rearrangements in P. gingivalis.</title>
        <authorList>
            <person name="Naito M."/>
            <person name="Hirakawa H."/>
            <person name="Yamashita A."/>
            <person name="Ohara N."/>
            <person name="Shoji M."/>
            <person name="Yukitake H."/>
            <person name="Nakayama K."/>
            <person name="Toh H."/>
            <person name="Yoshimura F."/>
            <person name="Kuhara S."/>
            <person name="Hattori M."/>
            <person name="Hayashi T."/>
            <person name="Nakayama K."/>
        </authorList>
    </citation>
    <scope>NUCLEOTIDE SEQUENCE [LARGE SCALE GENOMIC DNA]</scope>
    <source>
        <strain>ATCC 33277 / DSM 20709 / CIP 103683 / JCM 12257 / NCTC 11834 / 2561</strain>
    </source>
</reference>
<accession>B2RL62</accession>
<organism>
    <name type="scientific">Porphyromonas gingivalis (strain ATCC 33277 / DSM 20709 / CIP 103683 / JCM 12257 / NCTC 11834 / 2561)</name>
    <dbReference type="NCBI Taxonomy" id="431947"/>
    <lineage>
        <taxon>Bacteria</taxon>
        <taxon>Pseudomonadati</taxon>
        <taxon>Bacteroidota</taxon>
        <taxon>Bacteroidia</taxon>
        <taxon>Bacteroidales</taxon>
        <taxon>Porphyromonadaceae</taxon>
        <taxon>Porphyromonas</taxon>
    </lineage>
</organism>
<sequence>MSRISFDQLLEAGAHFGHLKRKWNPAMAPYIFMERNDIHIIDLHKTVAKVDEAAEVIKGMAKNGKKILFVATKKQAKEPIAELAKSVGMPYVVERWPGGMLTNFPTIRKAVKKMTQIDKMTADGTFDNLSKREKLQITRQRAKLEKTLGSIADMNRLPSALFVVDVMKEHIAVREANRLGIPVFAMVDTNSDPSLIDYVIPSNDDALKAIELIVGTMCQAINEGLMERKAEKPEEEETEEAAPRRERRARSGARRSRQNENEATAEAATEVAEAPEAEEAE</sequence>
<name>RS2_PORG3</name>
<proteinExistence type="inferred from homology"/>
<dbReference type="EMBL" id="AP009380">
    <property type="protein sequence ID" value="BAG34107.1"/>
    <property type="molecule type" value="Genomic_DNA"/>
</dbReference>
<dbReference type="RefSeq" id="WP_004584904.1">
    <property type="nucleotide sequence ID" value="NZ_CP025930.1"/>
</dbReference>
<dbReference type="SMR" id="B2RL62"/>
<dbReference type="GeneID" id="29256763"/>
<dbReference type="KEGG" id="pgn:PGN_1588"/>
<dbReference type="eggNOG" id="COG0052">
    <property type="taxonomic scope" value="Bacteria"/>
</dbReference>
<dbReference type="HOGENOM" id="CLU_040318_0_2_10"/>
<dbReference type="OrthoDB" id="9808036at2"/>
<dbReference type="BioCyc" id="PGIN431947:G1G2V-1789-MONOMER"/>
<dbReference type="Proteomes" id="UP000008842">
    <property type="component" value="Chromosome"/>
</dbReference>
<dbReference type="GO" id="GO:0022627">
    <property type="term" value="C:cytosolic small ribosomal subunit"/>
    <property type="evidence" value="ECO:0007669"/>
    <property type="project" value="TreeGrafter"/>
</dbReference>
<dbReference type="GO" id="GO:0003735">
    <property type="term" value="F:structural constituent of ribosome"/>
    <property type="evidence" value="ECO:0007669"/>
    <property type="project" value="InterPro"/>
</dbReference>
<dbReference type="GO" id="GO:0006412">
    <property type="term" value="P:translation"/>
    <property type="evidence" value="ECO:0007669"/>
    <property type="project" value="UniProtKB-UniRule"/>
</dbReference>
<dbReference type="CDD" id="cd01425">
    <property type="entry name" value="RPS2"/>
    <property type="match status" value="1"/>
</dbReference>
<dbReference type="FunFam" id="1.10.287.610:FF:000001">
    <property type="entry name" value="30S ribosomal protein S2"/>
    <property type="match status" value="1"/>
</dbReference>
<dbReference type="Gene3D" id="3.40.50.10490">
    <property type="entry name" value="Glucose-6-phosphate isomerase like protein, domain 1"/>
    <property type="match status" value="1"/>
</dbReference>
<dbReference type="Gene3D" id="1.10.287.610">
    <property type="entry name" value="Helix hairpin bin"/>
    <property type="match status" value="1"/>
</dbReference>
<dbReference type="HAMAP" id="MF_00291_B">
    <property type="entry name" value="Ribosomal_uS2_B"/>
    <property type="match status" value="1"/>
</dbReference>
<dbReference type="InterPro" id="IPR001865">
    <property type="entry name" value="Ribosomal_uS2"/>
</dbReference>
<dbReference type="InterPro" id="IPR005706">
    <property type="entry name" value="Ribosomal_uS2_bac/mit/plastid"/>
</dbReference>
<dbReference type="InterPro" id="IPR018130">
    <property type="entry name" value="Ribosomal_uS2_CS"/>
</dbReference>
<dbReference type="InterPro" id="IPR023591">
    <property type="entry name" value="Ribosomal_uS2_flav_dom_sf"/>
</dbReference>
<dbReference type="NCBIfam" id="TIGR01011">
    <property type="entry name" value="rpsB_bact"/>
    <property type="match status" value="1"/>
</dbReference>
<dbReference type="PANTHER" id="PTHR12534">
    <property type="entry name" value="30S RIBOSOMAL PROTEIN S2 PROKARYOTIC AND ORGANELLAR"/>
    <property type="match status" value="1"/>
</dbReference>
<dbReference type="PANTHER" id="PTHR12534:SF0">
    <property type="entry name" value="SMALL RIBOSOMAL SUBUNIT PROTEIN US2M"/>
    <property type="match status" value="1"/>
</dbReference>
<dbReference type="Pfam" id="PF00318">
    <property type="entry name" value="Ribosomal_S2"/>
    <property type="match status" value="1"/>
</dbReference>
<dbReference type="PRINTS" id="PR00395">
    <property type="entry name" value="RIBOSOMALS2"/>
</dbReference>
<dbReference type="SUPFAM" id="SSF52313">
    <property type="entry name" value="Ribosomal protein S2"/>
    <property type="match status" value="1"/>
</dbReference>
<dbReference type="PROSITE" id="PS00962">
    <property type="entry name" value="RIBOSOMAL_S2_1"/>
    <property type="match status" value="1"/>
</dbReference>
<dbReference type="PROSITE" id="PS00963">
    <property type="entry name" value="RIBOSOMAL_S2_2"/>
    <property type="match status" value="1"/>
</dbReference>